<keyword id="KW-0030">Aminoacyl-tRNA synthetase</keyword>
<keyword id="KW-0067">ATP-binding</keyword>
<keyword id="KW-0963">Cytoplasm</keyword>
<keyword id="KW-0436">Ligase</keyword>
<keyword id="KW-0547">Nucleotide-binding</keyword>
<keyword id="KW-0648">Protein biosynthesis</keyword>
<keyword id="KW-1185">Reference proteome</keyword>
<organism>
    <name type="scientific">Paraburkholderia phymatum (strain DSM 17167 / CIP 108236 / LMG 21445 / STM815)</name>
    <name type="common">Burkholderia phymatum</name>
    <dbReference type="NCBI Taxonomy" id="391038"/>
    <lineage>
        <taxon>Bacteria</taxon>
        <taxon>Pseudomonadati</taxon>
        <taxon>Pseudomonadota</taxon>
        <taxon>Betaproteobacteria</taxon>
        <taxon>Burkholderiales</taxon>
        <taxon>Burkholderiaceae</taxon>
        <taxon>Paraburkholderia</taxon>
    </lineage>
</organism>
<gene>
    <name evidence="1" type="primary">proS</name>
    <name type="ordered locus">Bphy_2646</name>
</gene>
<feature type="chain" id="PRO_1000199361" description="Proline--tRNA ligase">
    <location>
        <begin position="1"/>
        <end position="578"/>
    </location>
</feature>
<name>SYP_PARP8</name>
<accession>B2JHD3</accession>
<protein>
    <recommendedName>
        <fullName evidence="1">Proline--tRNA ligase</fullName>
        <ecNumber evidence="1">6.1.1.15</ecNumber>
    </recommendedName>
    <alternativeName>
        <fullName evidence="1">Prolyl-tRNA synthetase</fullName>
        <shortName evidence="1">ProRS</shortName>
    </alternativeName>
</protein>
<comment type="function">
    <text evidence="1">Catalyzes the attachment of proline to tRNA(Pro) in a two-step reaction: proline is first activated by ATP to form Pro-AMP and then transferred to the acceptor end of tRNA(Pro). As ProRS can inadvertently accommodate and process non-cognate amino acids such as alanine and cysteine, to avoid such errors it has two additional distinct editing activities against alanine. One activity is designated as 'pretransfer' editing and involves the tRNA(Pro)-independent hydrolysis of activated Ala-AMP. The other activity is designated 'posttransfer' editing and involves deacylation of mischarged Ala-tRNA(Pro). The misacylated Cys-tRNA(Pro) is not edited by ProRS.</text>
</comment>
<comment type="catalytic activity">
    <reaction evidence="1">
        <text>tRNA(Pro) + L-proline + ATP = L-prolyl-tRNA(Pro) + AMP + diphosphate</text>
        <dbReference type="Rhea" id="RHEA:14305"/>
        <dbReference type="Rhea" id="RHEA-COMP:9700"/>
        <dbReference type="Rhea" id="RHEA-COMP:9702"/>
        <dbReference type="ChEBI" id="CHEBI:30616"/>
        <dbReference type="ChEBI" id="CHEBI:33019"/>
        <dbReference type="ChEBI" id="CHEBI:60039"/>
        <dbReference type="ChEBI" id="CHEBI:78442"/>
        <dbReference type="ChEBI" id="CHEBI:78532"/>
        <dbReference type="ChEBI" id="CHEBI:456215"/>
        <dbReference type="EC" id="6.1.1.15"/>
    </reaction>
</comment>
<comment type="subunit">
    <text evidence="1">Homodimer.</text>
</comment>
<comment type="subcellular location">
    <subcellularLocation>
        <location evidence="1">Cytoplasm</location>
    </subcellularLocation>
</comment>
<comment type="domain">
    <text evidence="1">Consists of three domains: the N-terminal catalytic domain, the editing domain and the C-terminal anticodon-binding domain.</text>
</comment>
<comment type="similarity">
    <text evidence="1">Belongs to the class-II aminoacyl-tRNA synthetase family. ProS type 1 subfamily.</text>
</comment>
<reference key="1">
    <citation type="journal article" date="2014" name="Stand. Genomic Sci.">
        <title>Complete genome sequence of Burkholderia phymatum STM815(T), a broad host range and efficient nitrogen-fixing symbiont of Mimosa species.</title>
        <authorList>
            <person name="Moulin L."/>
            <person name="Klonowska A."/>
            <person name="Caroline B."/>
            <person name="Booth K."/>
            <person name="Vriezen J.A."/>
            <person name="Melkonian R."/>
            <person name="James E.K."/>
            <person name="Young J.P."/>
            <person name="Bena G."/>
            <person name="Hauser L."/>
            <person name="Land M."/>
            <person name="Kyrpides N."/>
            <person name="Bruce D."/>
            <person name="Chain P."/>
            <person name="Copeland A."/>
            <person name="Pitluck S."/>
            <person name="Woyke T."/>
            <person name="Lizotte-Waniewski M."/>
            <person name="Bristow J."/>
            <person name="Riley M."/>
        </authorList>
    </citation>
    <scope>NUCLEOTIDE SEQUENCE [LARGE SCALE GENOMIC DNA]</scope>
    <source>
        <strain>DSM 17167 / CIP 108236 / LMG 21445 / STM815</strain>
    </source>
</reference>
<dbReference type="EC" id="6.1.1.15" evidence="1"/>
<dbReference type="EMBL" id="CP001043">
    <property type="protein sequence ID" value="ACC71818.1"/>
    <property type="molecule type" value="Genomic_DNA"/>
</dbReference>
<dbReference type="RefSeq" id="WP_012402020.1">
    <property type="nucleotide sequence ID" value="NC_010622.1"/>
</dbReference>
<dbReference type="SMR" id="B2JHD3"/>
<dbReference type="STRING" id="391038.Bphy_2646"/>
<dbReference type="KEGG" id="bph:Bphy_2646"/>
<dbReference type="eggNOG" id="COG0442">
    <property type="taxonomic scope" value="Bacteria"/>
</dbReference>
<dbReference type="HOGENOM" id="CLU_016739_0_0_4"/>
<dbReference type="OrthoDB" id="9809052at2"/>
<dbReference type="Proteomes" id="UP000001192">
    <property type="component" value="Chromosome 1"/>
</dbReference>
<dbReference type="GO" id="GO:0005829">
    <property type="term" value="C:cytosol"/>
    <property type="evidence" value="ECO:0007669"/>
    <property type="project" value="TreeGrafter"/>
</dbReference>
<dbReference type="GO" id="GO:0002161">
    <property type="term" value="F:aminoacyl-tRNA deacylase activity"/>
    <property type="evidence" value="ECO:0007669"/>
    <property type="project" value="InterPro"/>
</dbReference>
<dbReference type="GO" id="GO:0005524">
    <property type="term" value="F:ATP binding"/>
    <property type="evidence" value="ECO:0007669"/>
    <property type="project" value="UniProtKB-UniRule"/>
</dbReference>
<dbReference type="GO" id="GO:0004827">
    <property type="term" value="F:proline-tRNA ligase activity"/>
    <property type="evidence" value="ECO:0007669"/>
    <property type="project" value="UniProtKB-UniRule"/>
</dbReference>
<dbReference type="GO" id="GO:0006433">
    <property type="term" value="P:prolyl-tRNA aminoacylation"/>
    <property type="evidence" value="ECO:0007669"/>
    <property type="project" value="UniProtKB-UniRule"/>
</dbReference>
<dbReference type="CDD" id="cd04334">
    <property type="entry name" value="ProRS-INS"/>
    <property type="match status" value="1"/>
</dbReference>
<dbReference type="CDD" id="cd00861">
    <property type="entry name" value="ProRS_anticodon_short"/>
    <property type="match status" value="1"/>
</dbReference>
<dbReference type="CDD" id="cd00779">
    <property type="entry name" value="ProRS_core_prok"/>
    <property type="match status" value="1"/>
</dbReference>
<dbReference type="FunFam" id="3.30.930.10:FF:000012">
    <property type="entry name" value="Proline--tRNA ligase"/>
    <property type="match status" value="1"/>
</dbReference>
<dbReference type="FunFam" id="3.30.930.10:FF:000097">
    <property type="entry name" value="Proline--tRNA ligase"/>
    <property type="match status" value="1"/>
</dbReference>
<dbReference type="Gene3D" id="3.40.50.800">
    <property type="entry name" value="Anticodon-binding domain"/>
    <property type="match status" value="1"/>
</dbReference>
<dbReference type="Gene3D" id="3.30.930.10">
    <property type="entry name" value="Bira Bifunctional Protein, Domain 2"/>
    <property type="match status" value="2"/>
</dbReference>
<dbReference type="Gene3D" id="3.90.960.10">
    <property type="entry name" value="YbaK/aminoacyl-tRNA synthetase-associated domain"/>
    <property type="match status" value="1"/>
</dbReference>
<dbReference type="HAMAP" id="MF_01569">
    <property type="entry name" value="Pro_tRNA_synth_type1"/>
    <property type="match status" value="1"/>
</dbReference>
<dbReference type="InterPro" id="IPR002314">
    <property type="entry name" value="aa-tRNA-synt_IIb"/>
</dbReference>
<dbReference type="InterPro" id="IPR006195">
    <property type="entry name" value="aa-tRNA-synth_II"/>
</dbReference>
<dbReference type="InterPro" id="IPR045864">
    <property type="entry name" value="aa-tRNA-synth_II/BPL/LPL"/>
</dbReference>
<dbReference type="InterPro" id="IPR004154">
    <property type="entry name" value="Anticodon-bd"/>
</dbReference>
<dbReference type="InterPro" id="IPR036621">
    <property type="entry name" value="Anticodon-bd_dom_sf"/>
</dbReference>
<dbReference type="InterPro" id="IPR002316">
    <property type="entry name" value="Pro-tRNA-ligase_IIa"/>
</dbReference>
<dbReference type="InterPro" id="IPR004500">
    <property type="entry name" value="Pro-tRNA-synth_IIa_bac-type"/>
</dbReference>
<dbReference type="InterPro" id="IPR023717">
    <property type="entry name" value="Pro-tRNA-Synthase_IIa_type1"/>
</dbReference>
<dbReference type="InterPro" id="IPR050062">
    <property type="entry name" value="Pro-tRNA_synthetase"/>
</dbReference>
<dbReference type="InterPro" id="IPR044140">
    <property type="entry name" value="ProRS_anticodon_short"/>
</dbReference>
<dbReference type="InterPro" id="IPR033730">
    <property type="entry name" value="ProRS_core_prok"/>
</dbReference>
<dbReference type="InterPro" id="IPR036754">
    <property type="entry name" value="YbaK/aa-tRNA-synt-asso_dom_sf"/>
</dbReference>
<dbReference type="InterPro" id="IPR007214">
    <property type="entry name" value="YbaK/aa-tRNA-synth-assoc-dom"/>
</dbReference>
<dbReference type="NCBIfam" id="NF006625">
    <property type="entry name" value="PRK09194.1"/>
    <property type="match status" value="1"/>
</dbReference>
<dbReference type="NCBIfam" id="TIGR00409">
    <property type="entry name" value="proS_fam_II"/>
    <property type="match status" value="1"/>
</dbReference>
<dbReference type="PANTHER" id="PTHR42753">
    <property type="entry name" value="MITOCHONDRIAL RIBOSOME PROTEIN L39/PROLYL-TRNA LIGASE FAMILY MEMBER"/>
    <property type="match status" value="1"/>
</dbReference>
<dbReference type="PANTHER" id="PTHR42753:SF2">
    <property type="entry name" value="PROLINE--TRNA LIGASE"/>
    <property type="match status" value="1"/>
</dbReference>
<dbReference type="Pfam" id="PF03129">
    <property type="entry name" value="HGTP_anticodon"/>
    <property type="match status" value="1"/>
</dbReference>
<dbReference type="Pfam" id="PF00587">
    <property type="entry name" value="tRNA-synt_2b"/>
    <property type="match status" value="1"/>
</dbReference>
<dbReference type="Pfam" id="PF04073">
    <property type="entry name" value="tRNA_edit"/>
    <property type="match status" value="1"/>
</dbReference>
<dbReference type="PIRSF" id="PIRSF001535">
    <property type="entry name" value="ProRS_1"/>
    <property type="match status" value="1"/>
</dbReference>
<dbReference type="PRINTS" id="PR01046">
    <property type="entry name" value="TRNASYNTHPRO"/>
</dbReference>
<dbReference type="SUPFAM" id="SSF52954">
    <property type="entry name" value="Class II aaRS ABD-related"/>
    <property type="match status" value="1"/>
</dbReference>
<dbReference type="SUPFAM" id="SSF55681">
    <property type="entry name" value="Class II aaRS and biotin synthetases"/>
    <property type="match status" value="1"/>
</dbReference>
<dbReference type="SUPFAM" id="SSF55826">
    <property type="entry name" value="YbaK/ProRS associated domain"/>
    <property type="match status" value="1"/>
</dbReference>
<dbReference type="PROSITE" id="PS50862">
    <property type="entry name" value="AA_TRNA_LIGASE_II"/>
    <property type="match status" value="1"/>
</dbReference>
<proteinExistence type="inferred from homology"/>
<sequence length="578" mass="64359">MKASRFFIGTLKEAPADAEIVSHKLMVRAGMIRRVAGGIYNYLPIGLRSIRKVEAIVREEMNRAGAIELLMPAVQPAELWQESGRWEKYGPELLRFKDRKQSDFVIGPTHEEVVTDIARGQIKSYRQLPVNFYQVQTKFRDEIRPRFGVMRGREFIMKDAYSFDKDMDGLRESYRKMYDAYVRIFTRLGLDFRAVAADNGSIGGSGSHEFHVIADTGEDDIAYCPTSDFASNVEAAEALPLIAERAAPKEELRKTSTPGKAKCEAVAEHLNIPLEKTIKSIILATENEGAEPTIWLLMLRGDHDLNEIKVNKLPGLGEFRFATEEEIVEWFGTPPGYLGPLNTKKPIKVIADRTVANMSDFVVGTNEVDFHTTGVNWGRDLPEPVVADIRNVKKDDPSPDGKGVIDICRGIEVGHVFQLGTKYSEAMNATFLDESGKPQPMQMGCYGIGITRILGAAIEQNFDDKGIIWPESIAPFEVVLCPMGYDRSDAVREQADKLHDELTAAGIDVILDDRGERPGVMFADWELIGVPHRLVIGERGLKDGKIEYQGRRDAEATLLPVEAAAQAVIDKIHAALAR</sequence>
<evidence type="ECO:0000255" key="1">
    <source>
        <dbReference type="HAMAP-Rule" id="MF_01569"/>
    </source>
</evidence>